<proteinExistence type="inferred from homology"/>
<protein>
    <recommendedName>
        <fullName evidence="1">Small ribosomal subunit protein uS17</fullName>
    </recommendedName>
    <alternativeName>
        <fullName evidence="2">30S ribosomal protein S17</fullName>
    </alternativeName>
</protein>
<evidence type="ECO:0000255" key="1">
    <source>
        <dbReference type="HAMAP-Rule" id="MF_01345"/>
    </source>
</evidence>
<evidence type="ECO:0000305" key="2"/>
<gene>
    <name evidence="1" type="primary">rpsQ</name>
    <name type="ordered locus">Mfl132</name>
</gene>
<comment type="function">
    <text evidence="1">One of the primary rRNA binding proteins, it binds specifically to the 5'-end of 16S ribosomal RNA.</text>
</comment>
<comment type="subunit">
    <text evidence="1">Part of the 30S ribosomal subunit.</text>
</comment>
<comment type="similarity">
    <text evidence="1">Belongs to the universal ribosomal protein uS17 family.</text>
</comment>
<dbReference type="EMBL" id="AE017263">
    <property type="protein sequence ID" value="AAT75488.1"/>
    <property type="molecule type" value="Genomic_DNA"/>
</dbReference>
<dbReference type="RefSeq" id="YP_053372.1">
    <property type="nucleotide sequence ID" value="NC_006055.1"/>
</dbReference>
<dbReference type="SMR" id="Q6F1Y5"/>
<dbReference type="STRING" id="265311.Mfl132"/>
<dbReference type="PaxDb" id="265311-Mfl132"/>
<dbReference type="EnsemblBacteria" id="AAT75488">
    <property type="protein sequence ID" value="AAT75488"/>
    <property type="gene ID" value="Mfl132"/>
</dbReference>
<dbReference type="KEGG" id="mfl:Mfl132"/>
<dbReference type="PATRIC" id="fig|265311.5.peg.133"/>
<dbReference type="eggNOG" id="COG0186">
    <property type="taxonomic scope" value="Bacteria"/>
</dbReference>
<dbReference type="HOGENOM" id="CLU_073626_1_0_14"/>
<dbReference type="OrthoDB" id="9811714at2"/>
<dbReference type="Proteomes" id="UP000006647">
    <property type="component" value="Chromosome"/>
</dbReference>
<dbReference type="GO" id="GO:0022627">
    <property type="term" value="C:cytosolic small ribosomal subunit"/>
    <property type="evidence" value="ECO:0007669"/>
    <property type="project" value="TreeGrafter"/>
</dbReference>
<dbReference type="GO" id="GO:0019843">
    <property type="term" value="F:rRNA binding"/>
    <property type="evidence" value="ECO:0007669"/>
    <property type="project" value="UniProtKB-UniRule"/>
</dbReference>
<dbReference type="GO" id="GO:0003735">
    <property type="term" value="F:structural constituent of ribosome"/>
    <property type="evidence" value="ECO:0007669"/>
    <property type="project" value="InterPro"/>
</dbReference>
<dbReference type="GO" id="GO:0006412">
    <property type="term" value="P:translation"/>
    <property type="evidence" value="ECO:0007669"/>
    <property type="project" value="UniProtKB-UniRule"/>
</dbReference>
<dbReference type="CDD" id="cd00364">
    <property type="entry name" value="Ribosomal_uS17"/>
    <property type="match status" value="1"/>
</dbReference>
<dbReference type="FunFam" id="2.40.50.140:FF:000026">
    <property type="entry name" value="30S ribosomal protein S17"/>
    <property type="match status" value="1"/>
</dbReference>
<dbReference type="Gene3D" id="2.40.50.140">
    <property type="entry name" value="Nucleic acid-binding proteins"/>
    <property type="match status" value="1"/>
</dbReference>
<dbReference type="HAMAP" id="MF_01345_B">
    <property type="entry name" value="Ribosomal_uS17_B"/>
    <property type="match status" value="1"/>
</dbReference>
<dbReference type="InterPro" id="IPR012340">
    <property type="entry name" value="NA-bd_OB-fold"/>
</dbReference>
<dbReference type="InterPro" id="IPR000266">
    <property type="entry name" value="Ribosomal_uS17"/>
</dbReference>
<dbReference type="InterPro" id="IPR019984">
    <property type="entry name" value="Ribosomal_uS17_bact/chlr"/>
</dbReference>
<dbReference type="InterPro" id="IPR019979">
    <property type="entry name" value="Ribosomal_uS17_CS"/>
</dbReference>
<dbReference type="NCBIfam" id="NF004123">
    <property type="entry name" value="PRK05610.1"/>
    <property type="match status" value="1"/>
</dbReference>
<dbReference type="NCBIfam" id="TIGR03635">
    <property type="entry name" value="uS17_bact"/>
    <property type="match status" value="1"/>
</dbReference>
<dbReference type="PANTHER" id="PTHR10744">
    <property type="entry name" value="40S RIBOSOMAL PROTEIN S11 FAMILY MEMBER"/>
    <property type="match status" value="1"/>
</dbReference>
<dbReference type="PANTHER" id="PTHR10744:SF1">
    <property type="entry name" value="SMALL RIBOSOMAL SUBUNIT PROTEIN US17M"/>
    <property type="match status" value="1"/>
</dbReference>
<dbReference type="Pfam" id="PF00366">
    <property type="entry name" value="Ribosomal_S17"/>
    <property type="match status" value="1"/>
</dbReference>
<dbReference type="PRINTS" id="PR00973">
    <property type="entry name" value="RIBOSOMALS17"/>
</dbReference>
<dbReference type="SUPFAM" id="SSF50249">
    <property type="entry name" value="Nucleic acid-binding proteins"/>
    <property type="match status" value="1"/>
</dbReference>
<dbReference type="PROSITE" id="PS00056">
    <property type="entry name" value="RIBOSOMAL_S17"/>
    <property type="match status" value="1"/>
</dbReference>
<keyword id="KW-1185">Reference proteome</keyword>
<keyword id="KW-0687">Ribonucleoprotein</keyword>
<keyword id="KW-0689">Ribosomal protein</keyword>
<keyword id="KW-0694">RNA-binding</keyword>
<keyword id="KW-0699">rRNA-binding</keyword>
<sequence>MERNSRRILVGKVVSDKMDKTITVLVETYKNHPIYKKRVKYSKKYKAHDEQQVAKIGDKVQIMETRPLSKTKNFRLVKVVEKAIL</sequence>
<reference key="1">
    <citation type="submission" date="2004-06" db="EMBL/GenBank/DDBJ databases">
        <authorList>
            <person name="Birren B.W."/>
            <person name="Stange-Thomann N."/>
            <person name="Hafez N."/>
            <person name="DeCaprio D."/>
            <person name="Fisher S."/>
            <person name="Butler J."/>
            <person name="Elkins T."/>
            <person name="Kodira C.D."/>
            <person name="Major J."/>
            <person name="Wang S."/>
            <person name="Nicol R."/>
            <person name="Nusbaum C."/>
        </authorList>
    </citation>
    <scope>NUCLEOTIDE SEQUENCE [LARGE SCALE GENOMIC DNA]</scope>
    <source>
        <strain>ATCC 33453 / NBRC 100688 / NCTC 11704 / L1</strain>
    </source>
</reference>
<name>RS17_MESFL</name>
<accession>Q6F1Y5</accession>
<organism>
    <name type="scientific">Mesoplasma florum (strain ATCC 33453 / NBRC 100688 / NCTC 11704 / L1)</name>
    <name type="common">Acholeplasma florum</name>
    <dbReference type="NCBI Taxonomy" id="265311"/>
    <lineage>
        <taxon>Bacteria</taxon>
        <taxon>Bacillati</taxon>
        <taxon>Mycoplasmatota</taxon>
        <taxon>Mollicutes</taxon>
        <taxon>Entomoplasmatales</taxon>
        <taxon>Entomoplasmataceae</taxon>
        <taxon>Mesoplasma</taxon>
    </lineage>
</organism>
<feature type="chain" id="PRO_0000233504" description="Small ribosomal subunit protein uS17">
    <location>
        <begin position="1"/>
        <end position="85"/>
    </location>
</feature>